<protein>
    <recommendedName>
        <fullName evidence="2">GPI-specific phospholipase A2-like PGAP3</fullName>
        <ecNumber evidence="1">3.1.1.-</ecNumber>
    </recommendedName>
    <alternativeName>
        <fullName>PER1-like domain-containing protein 1</fullName>
    </alternativeName>
    <alternativeName>
        <fullName>Post-GPI attachment to proteins factor 3</fullName>
    </alternativeName>
</protein>
<gene>
    <name evidence="2" type="primary">pgap3</name>
    <name type="synonym">perld1</name>
    <name type="ORF">zgc:171485</name>
</gene>
<sequence>MFLAAAAFLLSAPASASQGDKEPVYRDCVKHCVRANCTGARLRGFQSTQPPYMALTGWTCRDDCRYQCMWTTVGLYQAEGYSIPQFHGKWPFARFLCFEEPASALASLLNGLACLLMLLRYRSAVPCQSPMYHTITAFSLVSLNAWFWSTVFHTRDTYLTEKMDYFCASAVILYSIYLCCVRTLGLRRPAISSMVGVLLILAFTSHVSYLTFVSFDYGYNMAANASIGIINLLWWLCWCWLNRRILPYWWRCGMVVLLLHGLALLELLDFPPLFWVLDAHAVWHLSTVPVHFLFYSFLIDDSLHLLNTEKPGVKLD</sequence>
<keyword id="KW-0325">Glycoprotein</keyword>
<keyword id="KW-0333">Golgi apparatus</keyword>
<keyword id="KW-0337">GPI-anchor biosynthesis</keyword>
<keyword id="KW-0378">Hydrolase</keyword>
<keyword id="KW-0472">Membrane</keyword>
<keyword id="KW-1185">Reference proteome</keyword>
<keyword id="KW-0732">Signal</keyword>
<keyword id="KW-0812">Transmembrane</keyword>
<keyword id="KW-1133">Transmembrane helix</keyword>
<dbReference type="EC" id="3.1.1.-" evidence="1"/>
<dbReference type="EMBL" id="BC154443">
    <property type="protein sequence ID" value="AAI54444.1"/>
    <property type="molecule type" value="mRNA"/>
</dbReference>
<dbReference type="RefSeq" id="NP_001108063.1">
    <property type="nucleotide sequence ID" value="NM_001114591.1"/>
</dbReference>
<dbReference type="FunCoup" id="A8WFS8">
    <property type="interactions" value="1871"/>
</dbReference>
<dbReference type="STRING" id="7955.ENSDARP00000126623"/>
<dbReference type="GlyCosmos" id="A8WFS8">
    <property type="glycosylation" value="1 site, No reported glycans"/>
</dbReference>
<dbReference type="PaxDb" id="7955-ENSDARP00000126623"/>
<dbReference type="GeneID" id="100136873"/>
<dbReference type="KEGG" id="dre:100136873"/>
<dbReference type="AGR" id="ZFIN:ZDB-GENE-080204-27"/>
<dbReference type="CTD" id="93210"/>
<dbReference type="ZFIN" id="ZDB-GENE-080204-27">
    <property type="gene designation" value="pgap3"/>
</dbReference>
<dbReference type="eggNOG" id="KOG2970">
    <property type="taxonomic scope" value="Eukaryota"/>
</dbReference>
<dbReference type="InParanoid" id="A8WFS8"/>
<dbReference type="OrthoDB" id="419770at2759"/>
<dbReference type="PhylomeDB" id="A8WFS8"/>
<dbReference type="PRO" id="PR:A8WFS8"/>
<dbReference type="Proteomes" id="UP000000437">
    <property type="component" value="Alternate scaffold 12"/>
</dbReference>
<dbReference type="Proteomes" id="UP000000437">
    <property type="component" value="Chromosome 12"/>
</dbReference>
<dbReference type="GO" id="GO:0005789">
    <property type="term" value="C:endoplasmic reticulum membrane"/>
    <property type="evidence" value="ECO:0000250"/>
    <property type="project" value="UniProtKB"/>
</dbReference>
<dbReference type="GO" id="GO:0000139">
    <property type="term" value="C:Golgi membrane"/>
    <property type="evidence" value="ECO:0007669"/>
    <property type="project" value="UniProtKB-SubCell"/>
</dbReference>
<dbReference type="GO" id="GO:0016788">
    <property type="term" value="F:hydrolase activity, acting on ester bonds"/>
    <property type="evidence" value="ECO:0000250"/>
    <property type="project" value="UniProtKB"/>
</dbReference>
<dbReference type="GO" id="GO:0048854">
    <property type="term" value="P:brain morphogenesis"/>
    <property type="evidence" value="ECO:0000315"/>
    <property type="project" value="ZFIN"/>
</dbReference>
<dbReference type="GO" id="GO:0006506">
    <property type="term" value="P:GPI anchor biosynthetic process"/>
    <property type="evidence" value="ECO:0000318"/>
    <property type="project" value="GO_Central"/>
</dbReference>
<dbReference type="GO" id="GO:0006505">
    <property type="term" value="P:GPI anchor metabolic process"/>
    <property type="evidence" value="ECO:0000250"/>
    <property type="project" value="UniProtKB"/>
</dbReference>
<dbReference type="InterPro" id="IPR007217">
    <property type="entry name" value="Per1-like"/>
</dbReference>
<dbReference type="PANTHER" id="PTHR13148">
    <property type="entry name" value="PER1-RELATED"/>
    <property type="match status" value="1"/>
</dbReference>
<dbReference type="PANTHER" id="PTHR13148:SF0">
    <property type="entry name" value="POST-GPI ATTACHMENT TO PROTEINS FACTOR 3"/>
    <property type="match status" value="1"/>
</dbReference>
<dbReference type="Pfam" id="PF04080">
    <property type="entry name" value="Per1"/>
    <property type="match status" value="1"/>
</dbReference>
<name>PGAP3_DANRE</name>
<organism>
    <name type="scientific">Danio rerio</name>
    <name type="common">Zebrafish</name>
    <name type="synonym">Brachydanio rerio</name>
    <dbReference type="NCBI Taxonomy" id="7955"/>
    <lineage>
        <taxon>Eukaryota</taxon>
        <taxon>Metazoa</taxon>
        <taxon>Chordata</taxon>
        <taxon>Craniata</taxon>
        <taxon>Vertebrata</taxon>
        <taxon>Euteleostomi</taxon>
        <taxon>Actinopterygii</taxon>
        <taxon>Neopterygii</taxon>
        <taxon>Teleostei</taxon>
        <taxon>Ostariophysi</taxon>
        <taxon>Cypriniformes</taxon>
        <taxon>Danionidae</taxon>
        <taxon>Danioninae</taxon>
        <taxon>Danio</taxon>
    </lineage>
</organism>
<evidence type="ECO:0000250" key="1">
    <source>
        <dbReference type="UniProtKB" id="A2V7M9"/>
    </source>
</evidence>
<evidence type="ECO:0000250" key="2">
    <source>
        <dbReference type="UniProtKB" id="Q96FM1"/>
    </source>
</evidence>
<evidence type="ECO:0000255" key="3"/>
<evidence type="ECO:0000305" key="4"/>
<comment type="function">
    <text evidence="1">Involved in the fatty acid remodeling steps of GPI-anchor maturation where the unsaturated acyl chain at sn-2 of inositol phosphate is replaced by a saturated stearoyl chain. May catalyze the first step of the fatty acid remodeling, by removing the unsaturated acyl chain at sn-2 of inositol phosphate, generating a lyso-GPI intermediate. The fatty acid remodeling steps is critical for the integration of GPI-APs into lipid rafts.</text>
</comment>
<comment type="subcellular location">
    <subcellularLocation>
        <location evidence="1">Golgi apparatus membrane</location>
        <topology evidence="3">Multi-pass membrane protein</topology>
    </subcellularLocation>
</comment>
<comment type="similarity">
    <text evidence="4">Belongs to the PGAP3 family.</text>
</comment>
<accession>A8WFS8</accession>
<proteinExistence type="evidence at transcript level"/>
<feature type="signal peptide" evidence="3">
    <location>
        <begin position="1"/>
        <end position="19"/>
    </location>
</feature>
<feature type="chain" id="PRO_0000339358" description="GPI-specific phospholipase A2-like PGAP3">
    <location>
        <begin position="20"/>
        <end position="316"/>
    </location>
</feature>
<feature type="topological domain" description="Lumenal" evidence="3">
    <location>
        <begin position="20"/>
        <end position="97"/>
    </location>
</feature>
<feature type="transmembrane region" description="Helical" evidence="3">
    <location>
        <begin position="98"/>
        <end position="118"/>
    </location>
</feature>
<feature type="topological domain" description="Cytoplasmic" evidence="3">
    <location>
        <begin position="119"/>
        <end position="131"/>
    </location>
</feature>
<feature type="transmembrane region" description="Helical" evidence="3">
    <location>
        <begin position="132"/>
        <end position="152"/>
    </location>
</feature>
<feature type="topological domain" description="Lumenal" evidence="3">
    <location>
        <begin position="153"/>
        <end position="165"/>
    </location>
</feature>
<feature type="transmembrane region" description="Helical" evidence="3">
    <location>
        <begin position="166"/>
        <end position="186"/>
    </location>
</feature>
<feature type="topological domain" description="Cytoplasmic" evidence="3">
    <location>
        <begin position="187"/>
        <end position="194"/>
    </location>
</feature>
<feature type="transmembrane region" description="Helical" evidence="3">
    <location>
        <begin position="195"/>
        <end position="215"/>
    </location>
</feature>
<feature type="topological domain" description="Lumenal" evidence="3">
    <location>
        <begin position="216"/>
        <end position="220"/>
    </location>
</feature>
<feature type="transmembrane region" description="Helical" evidence="3">
    <location>
        <begin position="221"/>
        <end position="241"/>
    </location>
</feature>
<feature type="topological domain" description="Cytoplasmic" evidence="3">
    <location>
        <begin position="242"/>
        <end position="254"/>
    </location>
</feature>
<feature type="transmembrane region" description="Helical" evidence="3">
    <location>
        <begin position="255"/>
        <end position="275"/>
    </location>
</feature>
<feature type="topological domain" description="Lumenal" evidence="3">
    <location>
        <begin position="276"/>
        <end position="278"/>
    </location>
</feature>
<feature type="transmembrane region" description="Helical" evidence="3">
    <location>
        <begin position="279"/>
        <end position="299"/>
    </location>
</feature>
<feature type="topological domain" description="Cytoplasmic" evidence="3">
    <location>
        <begin position="300"/>
        <end position="316"/>
    </location>
</feature>
<feature type="glycosylation site" description="N-linked (GlcNAc...) asparagine" evidence="3">
    <location>
        <position position="36"/>
    </location>
</feature>
<reference key="1">
    <citation type="submission" date="2007-11" db="EMBL/GenBank/DDBJ databases">
        <authorList>
            <consortium name="NIH - Zebrafish Gene Collection (ZGC) project"/>
        </authorList>
    </citation>
    <scope>NUCLEOTIDE SEQUENCE [LARGE SCALE MRNA]</scope>
    <source>
        <tissue>Embryo</tissue>
    </source>
</reference>